<organism>
    <name type="scientific">Geobacillus thermodenitrificans (strain NG80-2)</name>
    <dbReference type="NCBI Taxonomy" id="420246"/>
    <lineage>
        <taxon>Bacteria</taxon>
        <taxon>Bacillati</taxon>
        <taxon>Bacillota</taxon>
        <taxon>Bacilli</taxon>
        <taxon>Bacillales</taxon>
        <taxon>Anoxybacillaceae</taxon>
        <taxon>Geobacillus</taxon>
    </lineage>
</organism>
<comment type="catalytic activity">
    <reaction evidence="1">
        <text>tRNA(Cys) + L-cysteine + ATP = L-cysteinyl-tRNA(Cys) + AMP + diphosphate</text>
        <dbReference type="Rhea" id="RHEA:17773"/>
        <dbReference type="Rhea" id="RHEA-COMP:9661"/>
        <dbReference type="Rhea" id="RHEA-COMP:9679"/>
        <dbReference type="ChEBI" id="CHEBI:30616"/>
        <dbReference type="ChEBI" id="CHEBI:33019"/>
        <dbReference type="ChEBI" id="CHEBI:35235"/>
        <dbReference type="ChEBI" id="CHEBI:78442"/>
        <dbReference type="ChEBI" id="CHEBI:78517"/>
        <dbReference type="ChEBI" id="CHEBI:456215"/>
        <dbReference type="EC" id="6.1.1.16"/>
    </reaction>
</comment>
<comment type="cofactor">
    <cofactor evidence="1">
        <name>Zn(2+)</name>
        <dbReference type="ChEBI" id="CHEBI:29105"/>
    </cofactor>
    <text evidence="1">Binds 1 zinc ion per subunit.</text>
</comment>
<comment type="subunit">
    <text evidence="1">Monomer.</text>
</comment>
<comment type="subcellular location">
    <subcellularLocation>
        <location evidence="1">Cytoplasm</location>
    </subcellularLocation>
</comment>
<comment type="similarity">
    <text evidence="1">Belongs to the class-I aminoacyl-tRNA synthetase family.</text>
</comment>
<evidence type="ECO:0000255" key="1">
    <source>
        <dbReference type="HAMAP-Rule" id="MF_00041"/>
    </source>
</evidence>
<dbReference type="EC" id="6.1.1.16" evidence="1"/>
<dbReference type="EMBL" id="CP000557">
    <property type="protein sequence ID" value="ABO65472.1"/>
    <property type="molecule type" value="Genomic_DNA"/>
</dbReference>
<dbReference type="RefSeq" id="WP_008882041.1">
    <property type="nucleotide sequence ID" value="NC_009328.1"/>
</dbReference>
<dbReference type="SMR" id="A4IJG8"/>
<dbReference type="GeneID" id="87622347"/>
<dbReference type="KEGG" id="gtn:GTNG_0085"/>
<dbReference type="eggNOG" id="COG0215">
    <property type="taxonomic scope" value="Bacteria"/>
</dbReference>
<dbReference type="HOGENOM" id="CLU_013528_0_1_9"/>
<dbReference type="Proteomes" id="UP000001578">
    <property type="component" value="Chromosome"/>
</dbReference>
<dbReference type="GO" id="GO:0005829">
    <property type="term" value="C:cytosol"/>
    <property type="evidence" value="ECO:0007669"/>
    <property type="project" value="TreeGrafter"/>
</dbReference>
<dbReference type="GO" id="GO:0005524">
    <property type="term" value="F:ATP binding"/>
    <property type="evidence" value="ECO:0007669"/>
    <property type="project" value="UniProtKB-UniRule"/>
</dbReference>
<dbReference type="GO" id="GO:0004817">
    <property type="term" value="F:cysteine-tRNA ligase activity"/>
    <property type="evidence" value="ECO:0007669"/>
    <property type="project" value="UniProtKB-UniRule"/>
</dbReference>
<dbReference type="GO" id="GO:0008270">
    <property type="term" value="F:zinc ion binding"/>
    <property type="evidence" value="ECO:0007669"/>
    <property type="project" value="UniProtKB-UniRule"/>
</dbReference>
<dbReference type="GO" id="GO:0006423">
    <property type="term" value="P:cysteinyl-tRNA aminoacylation"/>
    <property type="evidence" value="ECO:0007669"/>
    <property type="project" value="UniProtKB-UniRule"/>
</dbReference>
<dbReference type="CDD" id="cd07963">
    <property type="entry name" value="Anticodon_Ia_Cys"/>
    <property type="match status" value="1"/>
</dbReference>
<dbReference type="CDD" id="cd00672">
    <property type="entry name" value="CysRS_core"/>
    <property type="match status" value="1"/>
</dbReference>
<dbReference type="FunFam" id="1.20.120.1910:FF:000002">
    <property type="entry name" value="Cysteine--tRNA ligase"/>
    <property type="match status" value="1"/>
</dbReference>
<dbReference type="FunFam" id="3.40.50.620:FF:000009">
    <property type="entry name" value="Cysteine--tRNA ligase"/>
    <property type="match status" value="1"/>
</dbReference>
<dbReference type="Gene3D" id="1.20.120.1910">
    <property type="entry name" value="Cysteine-tRNA ligase, C-terminal anti-codon recognition domain"/>
    <property type="match status" value="1"/>
</dbReference>
<dbReference type="Gene3D" id="3.40.50.620">
    <property type="entry name" value="HUPs"/>
    <property type="match status" value="1"/>
</dbReference>
<dbReference type="HAMAP" id="MF_00041">
    <property type="entry name" value="Cys_tRNA_synth"/>
    <property type="match status" value="1"/>
</dbReference>
<dbReference type="InterPro" id="IPR015803">
    <property type="entry name" value="Cys-tRNA-ligase"/>
</dbReference>
<dbReference type="InterPro" id="IPR015273">
    <property type="entry name" value="Cys-tRNA-synt_Ia_DALR"/>
</dbReference>
<dbReference type="InterPro" id="IPR024909">
    <property type="entry name" value="Cys-tRNA/MSH_ligase"/>
</dbReference>
<dbReference type="InterPro" id="IPR056411">
    <property type="entry name" value="CysS_C"/>
</dbReference>
<dbReference type="InterPro" id="IPR014729">
    <property type="entry name" value="Rossmann-like_a/b/a_fold"/>
</dbReference>
<dbReference type="InterPro" id="IPR032678">
    <property type="entry name" value="tRNA-synt_1_cat_dom"/>
</dbReference>
<dbReference type="InterPro" id="IPR009080">
    <property type="entry name" value="tRNAsynth_Ia_anticodon-bd"/>
</dbReference>
<dbReference type="NCBIfam" id="TIGR00435">
    <property type="entry name" value="cysS"/>
    <property type="match status" value="1"/>
</dbReference>
<dbReference type="PANTHER" id="PTHR10890:SF3">
    <property type="entry name" value="CYSTEINE--TRNA LIGASE, CYTOPLASMIC"/>
    <property type="match status" value="1"/>
</dbReference>
<dbReference type="PANTHER" id="PTHR10890">
    <property type="entry name" value="CYSTEINYL-TRNA SYNTHETASE"/>
    <property type="match status" value="1"/>
</dbReference>
<dbReference type="Pfam" id="PF23493">
    <property type="entry name" value="CysS_C"/>
    <property type="match status" value="1"/>
</dbReference>
<dbReference type="Pfam" id="PF09190">
    <property type="entry name" value="DALR_2"/>
    <property type="match status" value="1"/>
</dbReference>
<dbReference type="Pfam" id="PF01406">
    <property type="entry name" value="tRNA-synt_1e"/>
    <property type="match status" value="1"/>
</dbReference>
<dbReference type="PRINTS" id="PR00983">
    <property type="entry name" value="TRNASYNTHCYS"/>
</dbReference>
<dbReference type="SMART" id="SM00840">
    <property type="entry name" value="DALR_2"/>
    <property type="match status" value="1"/>
</dbReference>
<dbReference type="SUPFAM" id="SSF47323">
    <property type="entry name" value="Anticodon-binding domain of a subclass of class I aminoacyl-tRNA synthetases"/>
    <property type="match status" value="1"/>
</dbReference>
<dbReference type="SUPFAM" id="SSF52374">
    <property type="entry name" value="Nucleotidylyl transferase"/>
    <property type="match status" value="1"/>
</dbReference>
<feature type="chain" id="PRO_1000006586" description="Cysteine--tRNA ligase">
    <location>
        <begin position="1"/>
        <end position="467"/>
    </location>
</feature>
<feature type="short sequence motif" description="'HIGH' region">
    <location>
        <begin position="32"/>
        <end position="42"/>
    </location>
</feature>
<feature type="short sequence motif" description="'KMSKS' region">
    <location>
        <begin position="267"/>
        <end position="271"/>
    </location>
</feature>
<feature type="binding site" evidence="1">
    <location>
        <position position="30"/>
    </location>
    <ligand>
        <name>Zn(2+)</name>
        <dbReference type="ChEBI" id="CHEBI:29105"/>
    </ligand>
</feature>
<feature type="binding site" evidence="1">
    <location>
        <position position="210"/>
    </location>
    <ligand>
        <name>Zn(2+)</name>
        <dbReference type="ChEBI" id="CHEBI:29105"/>
    </ligand>
</feature>
<feature type="binding site" evidence="1">
    <location>
        <position position="235"/>
    </location>
    <ligand>
        <name>Zn(2+)</name>
        <dbReference type="ChEBI" id="CHEBI:29105"/>
    </ligand>
</feature>
<feature type="binding site" evidence="1">
    <location>
        <position position="239"/>
    </location>
    <ligand>
        <name>Zn(2+)</name>
        <dbReference type="ChEBI" id="CHEBI:29105"/>
    </ligand>
</feature>
<feature type="binding site" evidence="1">
    <location>
        <position position="270"/>
    </location>
    <ligand>
        <name>ATP</name>
        <dbReference type="ChEBI" id="CHEBI:30616"/>
    </ligand>
</feature>
<feature type="modified residue" description="Phosphoserine" evidence="1">
    <location>
        <position position="271"/>
    </location>
</feature>
<accession>A4IJG8</accession>
<protein>
    <recommendedName>
        <fullName evidence="1">Cysteine--tRNA ligase</fullName>
        <ecNumber evidence="1">6.1.1.16</ecNumber>
    </recommendedName>
    <alternativeName>
        <fullName evidence="1">Cysteinyl-tRNA synthetase</fullName>
        <shortName evidence="1">CysRS</shortName>
    </alternativeName>
</protein>
<name>SYC_GEOTN</name>
<keyword id="KW-0030">Aminoacyl-tRNA synthetase</keyword>
<keyword id="KW-0067">ATP-binding</keyword>
<keyword id="KW-0963">Cytoplasm</keyword>
<keyword id="KW-0436">Ligase</keyword>
<keyword id="KW-0479">Metal-binding</keyword>
<keyword id="KW-0547">Nucleotide-binding</keyword>
<keyword id="KW-0597">Phosphoprotein</keyword>
<keyword id="KW-0648">Protein biosynthesis</keyword>
<keyword id="KW-0862">Zinc</keyword>
<gene>
    <name evidence="1" type="primary">cysS</name>
    <name type="ordered locus">GTNG_0085</name>
</gene>
<proteinExistence type="inferred from homology"/>
<reference key="1">
    <citation type="journal article" date="2007" name="Proc. Natl. Acad. Sci. U.S.A.">
        <title>Genome and proteome of long-chain alkane degrading Geobacillus thermodenitrificans NG80-2 isolated from a deep-subsurface oil reservoir.</title>
        <authorList>
            <person name="Feng L."/>
            <person name="Wang W."/>
            <person name="Cheng J."/>
            <person name="Ren Y."/>
            <person name="Zhao G."/>
            <person name="Gao C."/>
            <person name="Tang Y."/>
            <person name="Liu X."/>
            <person name="Han W."/>
            <person name="Peng X."/>
            <person name="Liu R."/>
            <person name="Wang L."/>
        </authorList>
    </citation>
    <scope>NUCLEOTIDE SEQUENCE [LARGE SCALE GENOMIC DNA]</scope>
    <source>
        <strain>NG80-2</strain>
    </source>
</reference>
<sequence length="467" mass="53868">MSSIRLYNTLTRKKETFEPLEPNKVKMYVCGPTVYNYIHIGNARAAIVFDTIRRYLEFRGYDVTYVSNFTDVDDKLIRAARELGESVPAIAERFIEAYFEDIEALGCKKADIHPRVTENIETIIEFIQALIDKGYAYEVDGDVYYRTRKFDGYGKLSHQSIDELQAGARIEVGEKKDDPLDFALWKAAKEGEISWDSPWGKGRPGWHIECSAMARKYLGDTIDIHAGGQDLTFPHHENEIAQSEALTGKPFAKYWLHNGYLNINNEKMSKSLGNFVLVHDIIRQIDPQVLRFFMLSVHYRHPINYSEELLESARRGLERLRTAYGNLQHRLGASTNLTDNDGEWLSRLADIRASFIREMDDDFNTANGIAVLFELAKQANLYLQEKTTSENVIHAFLREFEQLMDVLGLTLKQEELLDEEIEALIRQRNEARKNRDFALADRIRDELKAKNIILEDTPQGTRWKRGS</sequence>